<feature type="chain" id="PRO_0000163214" description="RNA-binding protein KhpA">
    <location>
        <begin position="1"/>
        <end position="79"/>
    </location>
</feature>
<feature type="domain" description="KH" evidence="1">
    <location>
        <begin position="32"/>
        <end position="79"/>
    </location>
</feature>
<dbReference type="EMBL" id="AE000657">
    <property type="protein sequence ID" value="AAC06503.1"/>
    <property type="molecule type" value="Genomic_DNA"/>
</dbReference>
<dbReference type="PIR" id="A70312">
    <property type="entry name" value="A70312"/>
</dbReference>
<dbReference type="RefSeq" id="NP_213084.1">
    <property type="nucleotide sequence ID" value="NC_000918.1"/>
</dbReference>
<dbReference type="RefSeq" id="WP_010880022.1">
    <property type="nucleotide sequence ID" value="NC_000918.1"/>
</dbReference>
<dbReference type="SMR" id="O66524"/>
<dbReference type="STRING" id="224324.aq_124a"/>
<dbReference type="EnsemblBacteria" id="AAC06503">
    <property type="protein sequence ID" value="AAC06503"/>
    <property type="gene ID" value="aq_124a"/>
</dbReference>
<dbReference type="KEGG" id="aae:aq_124a"/>
<dbReference type="PATRIC" id="fig|224324.8.peg.107"/>
<dbReference type="eggNOG" id="COG1837">
    <property type="taxonomic scope" value="Bacteria"/>
</dbReference>
<dbReference type="HOGENOM" id="CLU_132074_1_0_0"/>
<dbReference type="InParanoid" id="O66524"/>
<dbReference type="OrthoDB" id="9812389at2"/>
<dbReference type="Proteomes" id="UP000000798">
    <property type="component" value="Chromosome"/>
</dbReference>
<dbReference type="GO" id="GO:0005737">
    <property type="term" value="C:cytoplasm"/>
    <property type="evidence" value="ECO:0007669"/>
    <property type="project" value="UniProtKB-SubCell"/>
</dbReference>
<dbReference type="GO" id="GO:0003723">
    <property type="term" value="F:RNA binding"/>
    <property type="evidence" value="ECO:0007669"/>
    <property type="project" value="UniProtKB-UniRule"/>
</dbReference>
<dbReference type="CDD" id="cd22533">
    <property type="entry name" value="KH-II_YlqC-like"/>
    <property type="match status" value="1"/>
</dbReference>
<dbReference type="Gene3D" id="3.30.300.20">
    <property type="match status" value="1"/>
</dbReference>
<dbReference type="HAMAP" id="MF_00088">
    <property type="entry name" value="KhpA"/>
    <property type="match status" value="1"/>
</dbReference>
<dbReference type="InterPro" id="IPR015946">
    <property type="entry name" value="KH_dom-like_a/b"/>
</dbReference>
<dbReference type="InterPro" id="IPR009019">
    <property type="entry name" value="KH_sf_prok-type"/>
</dbReference>
<dbReference type="InterPro" id="IPR020627">
    <property type="entry name" value="KhpA"/>
</dbReference>
<dbReference type="PANTHER" id="PTHR34654:SF1">
    <property type="entry name" value="RNA-BINDING PROTEIN KHPA"/>
    <property type="match status" value="1"/>
</dbReference>
<dbReference type="PANTHER" id="PTHR34654">
    <property type="entry name" value="UPF0109 PROTEIN SCO5592"/>
    <property type="match status" value="1"/>
</dbReference>
<dbReference type="Pfam" id="PF13083">
    <property type="entry name" value="KH_KhpA-B"/>
    <property type="match status" value="1"/>
</dbReference>
<dbReference type="SUPFAM" id="SSF54814">
    <property type="entry name" value="Prokaryotic type KH domain (KH-domain type II)"/>
    <property type="match status" value="1"/>
</dbReference>
<name>KHPA_AQUAE</name>
<gene>
    <name evidence="1" type="primary">khpA</name>
    <name type="ordered locus">aq_124</name>
    <name type="ORF">aq_124A</name>
</gene>
<organism>
    <name type="scientific">Aquifex aeolicus (strain VF5)</name>
    <dbReference type="NCBI Taxonomy" id="224324"/>
    <lineage>
        <taxon>Bacteria</taxon>
        <taxon>Pseudomonadati</taxon>
        <taxon>Aquificota</taxon>
        <taxon>Aquificia</taxon>
        <taxon>Aquificales</taxon>
        <taxon>Aquificaceae</taxon>
        <taxon>Aquifex</taxon>
    </lineage>
</organism>
<sequence>MSALKDIVELTAKELVDNKDKVRVTEIEGEKTVVIELRVDPAELGKVIGKQGRIARALRTILTAIGRKIGKRVVLEILE</sequence>
<accession>O66524</accession>
<proteinExistence type="inferred from homology"/>
<protein>
    <recommendedName>
        <fullName evidence="1">RNA-binding protein KhpA</fullName>
    </recommendedName>
    <alternativeName>
        <fullName evidence="1">KH-domain protein A</fullName>
    </alternativeName>
</protein>
<keyword id="KW-0963">Cytoplasm</keyword>
<keyword id="KW-1185">Reference proteome</keyword>
<keyword id="KW-0694">RNA-binding</keyword>
<evidence type="ECO:0000255" key="1">
    <source>
        <dbReference type="HAMAP-Rule" id="MF_00088"/>
    </source>
</evidence>
<comment type="function">
    <text evidence="1">A probable RNA-binding protein.</text>
</comment>
<comment type="subcellular location">
    <subcellularLocation>
        <location evidence="1">Cytoplasm</location>
    </subcellularLocation>
</comment>
<comment type="similarity">
    <text evidence="1">Belongs to the KhpA RNA-binding protein family.</text>
</comment>
<reference key="1">
    <citation type="journal article" date="1998" name="Nature">
        <title>The complete genome of the hyperthermophilic bacterium Aquifex aeolicus.</title>
        <authorList>
            <person name="Deckert G."/>
            <person name="Warren P.V."/>
            <person name="Gaasterland T."/>
            <person name="Young W.G."/>
            <person name="Lenox A.L."/>
            <person name="Graham D.E."/>
            <person name="Overbeek R."/>
            <person name="Snead M.A."/>
            <person name="Keller M."/>
            <person name="Aujay M."/>
            <person name="Huber R."/>
            <person name="Feldman R.A."/>
            <person name="Short J.M."/>
            <person name="Olsen G.J."/>
            <person name="Swanson R.V."/>
        </authorList>
    </citation>
    <scope>NUCLEOTIDE SEQUENCE [LARGE SCALE GENOMIC DNA]</scope>
    <source>
        <strain>VF5</strain>
    </source>
</reference>